<name>MURB_AGRFC</name>
<proteinExistence type="inferred from homology"/>
<feature type="chain" id="PRO_0000179169" description="UDP-N-acetylenolpyruvoylglucosamine reductase">
    <location>
        <begin position="1"/>
        <end position="321"/>
    </location>
</feature>
<feature type="domain" description="FAD-binding PCMH-type" evidence="1">
    <location>
        <begin position="36"/>
        <end position="203"/>
    </location>
</feature>
<feature type="active site" evidence="1">
    <location>
        <position position="183"/>
    </location>
</feature>
<feature type="active site" description="Proton donor" evidence="1">
    <location>
        <position position="232"/>
    </location>
</feature>
<feature type="active site" evidence="1">
    <location>
        <position position="302"/>
    </location>
</feature>
<organism>
    <name type="scientific">Agrobacterium fabrum (strain C58 / ATCC 33970)</name>
    <name type="common">Agrobacterium tumefaciens (strain C58)</name>
    <dbReference type="NCBI Taxonomy" id="176299"/>
    <lineage>
        <taxon>Bacteria</taxon>
        <taxon>Pseudomonadati</taxon>
        <taxon>Pseudomonadota</taxon>
        <taxon>Alphaproteobacteria</taxon>
        <taxon>Hyphomicrobiales</taxon>
        <taxon>Rhizobiaceae</taxon>
        <taxon>Rhizobium/Agrobacterium group</taxon>
        <taxon>Agrobacterium</taxon>
        <taxon>Agrobacterium tumefaciens complex</taxon>
    </lineage>
</organism>
<evidence type="ECO:0000255" key="1">
    <source>
        <dbReference type="HAMAP-Rule" id="MF_00037"/>
    </source>
</evidence>
<protein>
    <recommendedName>
        <fullName evidence="1">UDP-N-acetylenolpyruvoylglucosamine reductase</fullName>
        <ecNumber evidence="1">1.3.1.98</ecNumber>
    </recommendedName>
    <alternativeName>
        <fullName evidence="1">UDP-N-acetylmuramate dehydrogenase</fullName>
    </alternativeName>
</protein>
<sequence>MRQVDGVKLLGRLGDGVNELRGRLTPDAPMDRVTWFRAGGLAEVMFQPHDTDDLIAFLKILPEDVPLTVVGVGSNLLVRDGGIPGVVVRLSAKGFGSVELADENRIKAGAICPDKHIAAMAMDNGIGGFHFYYGIPGSIGGALRMNAGANGGETRERVVEVYAVDRQGNQHVLSNADMGYSYRHSGADAGLIFTGALFEGYPEDKAKIRADMDAVRHHRETVQPIREQTGGSTFKNPEGHSAWELIDEAGGRGLVIGGAQMSSLHCNFMINTGHATGYDLEYLGETIRRRVFEKSGIRLEWEIKRLGLFMPGREVEPFLGA</sequence>
<comment type="function">
    <text evidence="1">Cell wall formation.</text>
</comment>
<comment type="catalytic activity">
    <reaction evidence="1">
        <text>UDP-N-acetyl-alpha-D-muramate + NADP(+) = UDP-N-acetyl-3-O-(1-carboxyvinyl)-alpha-D-glucosamine + NADPH + H(+)</text>
        <dbReference type="Rhea" id="RHEA:12248"/>
        <dbReference type="ChEBI" id="CHEBI:15378"/>
        <dbReference type="ChEBI" id="CHEBI:57783"/>
        <dbReference type="ChEBI" id="CHEBI:58349"/>
        <dbReference type="ChEBI" id="CHEBI:68483"/>
        <dbReference type="ChEBI" id="CHEBI:70757"/>
        <dbReference type="EC" id="1.3.1.98"/>
    </reaction>
</comment>
<comment type="cofactor">
    <cofactor evidence="1">
        <name>FAD</name>
        <dbReference type="ChEBI" id="CHEBI:57692"/>
    </cofactor>
</comment>
<comment type="pathway">
    <text evidence="1">Cell wall biogenesis; peptidoglycan biosynthesis.</text>
</comment>
<comment type="subcellular location">
    <subcellularLocation>
        <location evidence="1">Cytoplasm</location>
    </subcellularLocation>
</comment>
<comment type="similarity">
    <text evidence="1">Belongs to the MurB family.</text>
</comment>
<accession>Q8UDN0</accession>
<keyword id="KW-0131">Cell cycle</keyword>
<keyword id="KW-0132">Cell division</keyword>
<keyword id="KW-0133">Cell shape</keyword>
<keyword id="KW-0961">Cell wall biogenesis/degradation</keyword>
<keyword id="KW-0963">Cytoplasm</keyword>
<keyword id="KW-0274">FAD</keyword>
<keyword id="KW-0285">Flavoprotein</keyword>
<keyword id="KW-0521">NADP</keyword>
<keyword id="KW-0560">Oxidoreductase</keyword>
<keyword id="KW-0573">Peptidoglycan synthesis</keyword>
<keyword id="KW-1185">Reference proteome</keyword>
<gene>
    <name evidence="1" type="primary">murB</name>
    <name type="ordered locus">Atu2092</name>
    <name type="ORF">AGR_C_3794</name>
</gene>
<reference key="1">
    <citation type="journal article" date="2001" name="Science">
        <title>The genome of the natural genetic engineer Agrobacterium tumefaciens C58.</title>
        <authorList>
            <person name="Wood D.W."/>
            <person name="Setubal J.C."/>
            <person name="Kaul R."/>
            <person name="Monks D.E."/>
            <person name="Kitajima J.P."/>
            <person name="Okura V.K."/>
            <person name="Zhou Y."/>
            <person name="Chen L."/>
            <person name="Wood G.E."/>
            <person name="Almeida N.F. Jr."/>
            <person name="Woo L."/>
            <person name="Chen Y."/>
            <person name="Paulsen I.T."/>
            <person name="Eisen J.A."/>
            <person name="Karp P.D."/>
            <person name="Bovee D. Sr."/>
            <person name="Chapman P."/>
            <person name="Clendenning J."/>
            <person name="Deatherage G."/>
            <person name="Gillet W."/>
            <person name="Grant C."/>
            <person name="Kutyavin T."/>
            <person name="Levy R."/>
            <person name="Li M.-J."/>
            <person name="McClelland E."/>
            <person name="Palmieri A."/>
            <person name="Raymond C."/>
            <person name="Rouse G."/>
            <person name="Saenphimmachak C."/>
            <person name="Wu Z."/>
            <person name="Romero P."/>
            <person name="Gordon D."/>
            <person name="Zhang S."/>
            <person name="Yoo H."/>
            <person name="Tao Y."/>
            <person name="Biddle P."/>
            <person name="Jung M."/>
            <person name="Krespan W."/>
            <person name="Perry M."/>
            <person name="Gordon-Kamm B."/>
            <person name="Liao L."/>
            <person name="Kim S."/>
            <person name="Hendrick C."/>
            <person name="Zhao Z.-Y."/>
            <person name="Dolan M."/>
            <person name="Chumley F."/>
            <person name="Tingey S.V."/>
            <person name="Tomb J.-F."/>
            <person name="Gordon M.P."/>
            <person name="Olson M.V."/>
            <person name="Nester E.W."/>
        </authorList>
    </citation>
    <scope>NUCLEOTIDE SEQUENCE [LARGE SCALE GENOMIC DNA]</scope>
    <source>
        <strain>C58 / ATCC 33970</strain>
    </source>
</reference>
<reference key="2">
    <citation type="journal article" date="2001" name="Science">
        <title>Genome sequence of the plant pathogen and biotechnology agent Agrobacterium tumefaciens C58.</title>
        <authorList>
            <person name="Goodner B."/>
            <person name="Hinkle G."/>
            <person name="Gattung S."/>
            <person name="Miller N."/>
            <person name="Blanchard M."/>
            <person name="Qurollo B."/>
            <person name="Goldman B.S."/>
            <person name="Cao Y."/>
            <person name="Askenazi M."/>
            <person name="Halling C."/>
            <person name="Mullin L."/>
            <person name="Houmiel K."/>
            <person name="Gordon J."/>
            <person name="Vaudin M."/>
            <person name="Iartchouk O."/>
            <person name="Epp A."/>
            <person name="Liu F."/>
            <person name="Wollam C."/>
            <person name="Allinger M."/>
            <person name="Doughty D."/>
            <person name="Scott C."/>
            <person name="Lappas C."/>
            <person name="Markelz B."/>
            <person name="Flanagan C."/>
            <person name="Crowell C."/>
            <person name="Gurson J."/>
            <person name="Lomo C."/>
            <person name="Sear C."/>
            <person name="Strub G."/>
            <person name="Cielo C."/>
            <person name="Slater S."/>
        </authorList>
    </citation>
    <scope>NUCLEOTIDE SEQUENCE [LARGE SCALE GENOMIC DNA]</scope>
    <source>
        <strain>C58 / ATCC 33970</strain>
    </source>
</reference>
<dbReference type="EC" id="1.3.1.98" evidence="1"/>
<dbReference type="EMBL" id="AE007869">
    <property type="protein sequence ID" value="AAK87842.1"/>
    <property type="molecule type" value="Genomic_DNA"/>
</dbReference>
<dbReference type="PIR" id="A97611">
    <property type="entry name" value="A97611"/>
</dbReference>
<dbReference type="PIR" id="AE2833">
    <property type="entry name" value="AE2833"/>
</dbReference>
<dbReference type="RefSeq" id="NP_355057.1">
    <property type="nucleotide sequence ID" value="NC_003062.2"/>
</dbReference>
<dbReference type="RefSeq" id="WP_010972051.1">
    <property type="nucleotide sequence ID" value="NC_003062.2"/>
</dbReference>
<dbReference type="SMR" id="Q8UDN0"/>
<dbReference type="STRING" id="176299.Atu2092"/>
<dbReference type="EnsemblBacteria" id="AAK87842">
    <property type="protein sequence ID" value="AAK87842"/>
    <property type="gene ID" value="Atu2092"/>
</dbReference>
<dbReference type="GeneID" id="1134130"/>
<dbReference type="KEGG" id="atu:Atu2092"/>
<dbReference type="PATRIC" id="fig|176299.10.peg.2106"/>
<dbReference type="eggNOG" id="COG0812">
    <property type="taxonomic scope" value="Bacteria"/>
</dbReference>
<dbReference type="HOGENOM" id="CLU_035304_1_0_5"/>
<dbReference type="OrthoDB" id="9804753at2"/>
<dbReference type="PhylomeDB" id="Q8UDN0"/>
<dbReference type="BioCyc" id="AGRO:ATU2092-MONOMER"/>
<dbReference type="UniPathway" id="UPA00219"/>
<dbReference type="Proteomes" id="UP000000813">
    <property type="component" value="Chromosome circular"/>
</dbReference>
<dbReference type="GO" id="GO:0005829">
    <property type="term" value="C:cytosol"/>
    <property type="evidence" value="ECO:0007669"/>
    <property type="project" value="TreeGrafter"/>
</dbReference>
<dbReference type="GO" id="GO:0071949">
    <property type="term" value="F:FAD binding"/>
    <property type="evidence" value="ECO:0007669"/>
    <property type="project" value="InterPro"/>
</dbReference>
<dbReference type="GO" id="GO:0008762">
    <property type="term" value="F:UDP-N-acetylmuramate dehydrogenase activity"/>
    <property type="evidence" value="ECO:0007669"/>
    <property type="project" value="UniProtKB-UniRule"/>
</dbReference>
<dbReference type="GO" id="GO:0051301">
    <property type="term" value="P:cell division"/>
    <property type="evidence" value="ECO:0007669"/>
    <property type="project" value="UniProtKB-KW"/>
</dbReference>
<dbReference type="GO" id="GO:0071555">
    <property type="term" value="P:cell wall organization"/>
    <property type="evidence" value="ECO:0007669"/>
    <property type="project" value="UniProtKB-KW"/>
</dbReference>
<dbReference type="GO" id="GO:0009252">
    <property type="term" value="P:peptidoglycan biosynthetic process"/>
    <property type="evidence" value="ECO:0007669"/>
    <property type="project" value="UniProtKB-UniRule"/>
</dbReference>
<dbReference type="GO" id="GO:0008360">
    <property type="term" value="P:regulation of cell shape"/>
    <property type="evidence" value="ECO:0007669"/>
    <property type="project" value="UniProtKB-KW"/>
</dbReference>
<dbReference type="Gene3D" id="3.30.465.10">
    <property type="match status" value="1"/>
</dbReference>
<dbReference type="Gene3D" id="3.90.78.10">
    <property type="entry name" value="UDP-N-acetylenolpyruvoylglucosamine reductase, C-terminal domain"/>
    <property type="match status" value="1"/>
</dbReference>
<dbReference type="Gene3D" id="3.30.43.10">
    <property type="entry name" value="Uridine Diphospho-n-acetylenolpyruvylglucosamine Reductase, domain 2"/>
    <property type="match status" value="1"/>
</dbReference>
<dbReference type="HAMAP" id="MF_00037">
    <property type="entry name" value="MurB"/>
    <property type="match status" value="1"/>
</dbReference>
<dbReference type="InterPro" id="IPR016166">
    <property type="entry name" value="FAD-bd_PCMH"/>
</dbReference>
<dbReference type="InterPro" id="IPR036318">
    <property type="entry name" value="FAD-bd_PCMH-like_sf"/>
</dbReference>
<dbReference type="InterPro" id="IPR016167">
    <property type="entry name" value="FAD-bd_PCMH_sub1"/>
</dbReference>
<dbReference type="InterPro" id="IPR016169">
    <property type="entry name" value="FAD-bd_PCMH_sub2"/>
</dbReference>
<dbReference type="InterPro" id="IPR003170">
    <property type="entry name" value="MurB"/>
</dbReference>
<dbReference type="InterPro" id="IPR011601">
    <property type="entry name" value="MurB_C"/>
</dbReference>
<dbReference type="InterPro" id="IPR036635">
    <property type="entry name" value="MurB_C_sf"/>
</dbReference>
<dbReference type="InterPro" id="IPR006094">
    <property type="entry name" value="Oxid_FAD_bind_N"/>
</dbReference>
<dbReference type="NCBIfam" id="TIGR00179">
    <property type="entry name" value="murB"/>
    <property type="match status" value="1"/>
</dbReference>
<dbReference type="NCBIfam" id="NF010480">
    <property type="entry name" value="PRK13905.1"/>
    <property type="match status" value="1"/>
</dbReference>
<dbReference type="PANTHER" id="PTHR21071">
    <property type="entry name" value="UDP-N-ACETYLENOLPYRUVOYLGLUCOSAMINE REDUCTASE"/>
    <property type="match status" value="1"/>
</dbReference>
<dbReference type="PANTHER" id="PTHR21071:SF4">
    <property type="entry name" value="UDP-N-ACETYLENOLPYRUVOYLGLUCOSAMINE REDUCTASE"/>
    <property type="match status" value="1"/>
</dbReference>
<dbReference type="Pfam" id="PF01565">
    <property type="entry name" value="FAD_binding_4"/>
    <property type="match status" value="1"/>
</dbReference>
<dbReference type="Pfam" id="PF02873">
    <property type="entry name" value="MurB_C"/>
    <property type="match status" value="1"/>
</dbReference>
<dbReference type="SUPFAM" id="SSF56176">
    <property type="entry name" value="FAD-binding/transporter-associated domain-like"/>
    <property type="match status" value="1"/>
</dbReference>
<dbReference type="SUPFAM" id="SSF56194">
    <property type="entry name" value="Uridine diphospho-N-Acetylenolpyruvylglucosamine reductase, MurB, C-terminal domain"/>
    <property type="match status" value="1"/>
</dbReference>
<dbReference type="PROSITE" id="PS51387">
    <property type="entry name" value="FAD_PCMH"/>
    <property type="match status" value="1"/>
</dbReference>